<keyword id="KW-0067">ATP-binding</keyword>
<keyword id="KW-0963">Cytoplasm</keyword>
<keyword id="KW-0227">DNA damage</keyword>
<keyword id="KW-0233">DNA recombination</keyword>
<keyword id="KW-0234">DNA repair</keyword>
<keyword id="KW-0238">DNA-binding</keyword>
<keyword id="KW-0378">Hydrolase</keyword>
<keyword id="KW-0547">Nucleotide-binding</keyword>
<keyword id="KW-1185">Reference proteome</keyword>
<protein>
    <recommendedName>
        <fullName evidence="1">Holliday junction branch migration complex subunit RuvB</fullName>
        <ecNumber evidence="1">3.6.4.-</ecNumber>
    </recommendedName>
</protein>
<name>RUVB_JANSC</name>
<accession>Q28TS9</accession>
<dbReference type="EC" id="3.6.4.-" evidence="1"/>
<dbReference type="EMBL" id="CP000264">
    <property type="protein sequence ID" value="ABD53883.1"/>
    <property type="molecule type" value="Genomic_DNA"/>
</dbReference>
<dbReference type="RefSeq" id="WP_011454091.1">
    <property type="nucleotide sequence ID" value="NC_007802.1"/>
</dbReference>
<dbReference type="SMR" id="Q28TS9"/>
<dbReference type="STRING" id="290400.Jann_0966"/>
<dbReference type="KEGG" id="jan:Jann_0966"/>
<dbReference type="eggNOG" id="COG2255">
    <property type="taxonomic scope" value="Bacteria"/>
</dbReference>
<dbReference type="HOGENOM" id="CLU_055599_1_0_5"/>
<dbReference type="OrthoDB" id="9804478at2"/>
<dbReference type="Proteomes" id="UP000008326">
    <property type="component" value="Chromosome"/>
</dbReference>
<dbReference type="GO" id="GO:0005737">
    <property type="term" value="C:cytoplasm"/>
    <property type="evidence" value="ECO:0007669"/>
    <property type="project" value="UniProtKB-SubCell"/>
</dbReference>
<dbReference type="GO" id="GO:0048476">
    <property type="term" value="C:Holliday junction resolvase complex"/>
    <property type="evidence" value="ECO:0007669"/>
    <property type="project" value="UniProtKB-UniRule"/>
</dbReference>
<dbReference type="GO" id="GO:0005524">
    <property type="term" value="F:ATP binding"/>
    <property type="evidence" value="ECO:0007669"/>
    <property type="project" value="UniProtKB-UniRule"/>
</dbReference>
<dbReference type="GO" id="GO:0016887">
    <property type="term" value="F:ATP hydrolysis activity"/>
    <property type="evidence" value="ECO:0007669"/>
    <property type="project" value="InterPro"/>
</dbReference>
<dbReference type="GO" id="GO:0000400">
    <property type="term" value="F:four-way junction DNA binding"/>
    <property type="evidence" value="ECO:0007669"/>
    <property type="project" value="UniProtKB-UniRule"/>
</dbReference>
<dbReference type="GO" id="GO:0009378">
    <property type="term" value="F:four-way junction helicase activity"/>
    <property type="evidence" value="ECO:0007669"/>
    <property type="project" value="InterPro"/>
</dbReference>
<dbReference type="GO" id="GO:0006310">
    <property type="term" value="P:DNA recombination"/>
    <property type="evidence" value="ECO:0007669"/>
    <property type="project" value="UniProtKB-UniRule"/>
</dbReference>
<dbReference type="GO" id="GO:0006281">
    <property type="term" value="P:DNA repair"/>
    <property type="evidence" value="ECO:0007669"/>
    <property type="project" value="UniProtKB-UniRule"/>
</dbReference>
<dbReference type="CDD" id="cd00009">
    <property type="entry name" value="AAA"/>
    <property type="match status" value="1"/>
</dbReference>
<dbReference type="Gene3D" id="1.10.8.60">
    <property type="match status" value="1"/>
</dbReference>
<dbReference type="Gene3D" id="3.40.50.300">
    <property type="entry name" value="P-loop containing nucleotide triphosphate hydrolases"/>
    <property type="match status" value="1"/>
</dbReference>
<dbReference type="Gene3D" id="1.10.10.10">
    <property type="entry name" value="Winged helix-like DNA-binding domain superfamily/Winged helix DNA-binding domain"/>
    <property type="match status" value="1"/>
</dbReference>
<dbReference type="HAMAP" id="MF_00016">
    <property type="entry name" value="DNA_HJ_migration_RuvB"/>
    <property type="match status" value="1"/>
</dbReference>
<dbReference type="InterPro" id="IPR003593">
    <property type="entry name" value="AAA+_ATPase"/>
</dbReference>
<dbReference type="InterPro" id="IPR041445">
    <property type="entry name" value="AAA_lid_4"/>
</dbReference>
<dbReference type="InterPro" id="IPR000641">
    <property type="entry name" value="CbxX/CfxQ"/>
</dbReference>
<dbReference type="InterPro" id="IPR004605">
    <property type="entry name" value="DNA_helicase_Holl-junc_RuvB"/>
</dbReference>
<dbReference type="InterPro" id="IPR027417">
    <property type="entry name" value="P-loop_NTPase"/>
</dbReference>
<dbReference type="InterPro" id="IPR008824">
    <property type="entry name" value="RuvB-like_N"/>
</dbReference>
<dbReference type="InterPro" id="IPR008823">
    <property type="entry name" value="RuvB_C"/>
</dbReference>
<dbReference type="InterPro" id="IPR036388">
    <property type="entry name" value="WH-like_DNA-bd_sf"/>
</dbReference>
<dbReference type="InterPro" id="IPR036390">
    <property type="entry name" value="WH_DNA-bd_sf"/>
</dbReference>
<dbReference type="NCBIfam" id="NF000868">
    <property type="entry name" value="PRK00080.1"/>
    <property type="match status" value="1"/>
</dbReference>
<dbReference type="NCBIfam" id="TIGR00635">
    <property type="entry name" value="ruvB"/>
    <property type="match status" value="1"/>
</dbReference>
<dbReference type="PANTHER" id="PTHR42848">
    <property type="match status" value="1"/>
</dbReference>
<dbReference type="PANTHER" id="PTHR42848:SF1">
    <property type="entry name" value="HOLLIDAY JUNCTION BRANCH MIGRATION COMPLEX SUBUNIT RUVB"/>
    <property type="match status" value="1"/>
</dbReference>
<dbReference type="Pfam" id="PF17864">
    <property type="entry name" value="AAA_lid_4"/>
    <property type="match status" value="1"/>
</dbReference>
<dbReference type="Pfam" id="PF05491">
    <property type="entry name" value="RuvB_C"/>
    <property type="match status" value="1"/>
</dbReference>
<dbReference type="Pfam" id="PF05496">
    <property type="entry name" value="RuvB_N"/>
    <property type="match status" value="1"/>
</dbReference>
<dbReference type="PRINTS" id="PR00819">
    <property type="entry name" value="CBXCFQXSUPER"/>
</dbReference>
<dbReference type="SMART" id="SM00382">
    <property type="entry name" value="AAA"/>
    <property type="match status" value="1"/>
</dbReference>
<dbReference type="SUPFAM" id="SSF52540">
    <property type="entry name" value="P-loop containing nucleoside triphosphate hydrolases"/>
    <property type="match status" value="1"/>
</dbReference>
<dbReference type="SUPFAM" id="SSF46785">
    <property type="entry name" value="Winged helix' DNA-binding domain"/>
    <property type="match status" value="1"/>
</dbReference>
<organism>
    <name type="scientific">Jannaschia sp. (strain CCS1)</name>
    <dbReference type="NCBI Taxonomy" id="290400"/>
    <lineage>
        <taxon>Bacteria</taxon>
        <taxon>Pseudomonadati</taxon>
        <taxon>Pseudomonadota</taxon>
        <taxon>Alphaproteobacteria</taxon>
        <taxon>Rhodobacterales</taxon>
        <taxon>Roseobacteraceae</taxon>
        <taxon>Jannaschia</taxon>
    </lineage>
</organism>
<comment type="function">
    <text evidence="1">The RuvA-RuvB-RuvC complex processes Holliday junction (HJ) DNA during genetic recombination and DNA repair, while the RuvA-RuvB complex plays an important role in the rescue of blocked DNA replication forks via replication fork reversal (RFR). RuvA specifically binds to HJ cruciform DNA, conferring on it an open structure. The RuvB hexamer acts as an ATP-dependent pump, pulling dsDNA into and through the RuvAB complex. RuvB forms 2 homohexamers on either side of HJ DNA bound by 1 or 2 RuvA tetramers; 4 subunits per hexamer contact DNA at a time. Coordinated motions by a converter formed by DNA-disengaged RuvB subunits stimulates ATP hydrolysis and nucleotide exchange. Immobilization of the converter enables RuvB to convert the ATP-contained energy into a lever motion, pulling 2 nucleotides of DNA out of the RuvA tetramer per ATP hydrolyzed, thus driving DNA branch migration. The RuvB motors rotate together with the DNA substrate, which together with the progressing nucleotide cycle form the mechanistic basis for DNA recombination by continuous HJ branch migration. Branch migration allows RuvC to scan DNA until it finds its consensus sequence, where it cleaves and resolves cruciform DNA.</text>
</comment>
<comment type="catalytic activity">
    <reaction evidence="1">
        <text>ATP + H2O = ADP + phosphate + H(+)</text>
        <dbReference type="Rhea" id="RHEA:13065"/>
        <dbReference type="ChEBI" id="CHEBI:15377"/>
        <dbReference type="ChEBI" id="CHEBI:15378"/>
        <dbReference type="ChEBI" id="CHEBI:30616"/>
        <dbReference type="ChEBI" id="CHEBI:43474"/>
        <dbReference type="ChEBI" id="CHEBI:456216"/>
    </reaction>
</comment>
<comment type="subunit">
    <text evidence="1">Homohexamer. Forms an RuvA(8)-RuvB(12)-Holliday junction (HJ) complex. HJ DNA is sandwiched between 2 RuvA tetramers; dsDNA enters through RuvA and exits via RuvB. An RuvB hexamer assembles on each DNA strand where it exits the tetramer. Each RuvB hexamer is contacted by two RuvA subunits (via domain III) on 2 adjacent RuvB subunits; this complex drives branch migration. In the full resolvosome a probable DNA-RuvA(4)-RuvB(12)-RuvC(2) complex forms which resolves the HJ.</text>
</comment>
<comment type="subcellular location">
    <subcellularLocation>
        <location evidence="1">Cytoplasm</location>
    </subcellularLocation>
</comment>
<comment type="domain">
    <text evidence="1">Has 3 domains, the large (RuvB-L) and small ATPase (RuvB-S) domains and the C-terminal head (RuvB-H) domain. The head domain binds DNA, while the ATPase domains jointly bind ATP, ADP or are empty depending on the state of the subunit in the translocation cycle. During a single DNA translocation step the structure of each domain remains the same, but their relative positions change.</text>
</comment>
<comment type="similarity">
    <text evidence="1">Belongs to the RuvB family.</text>
</comment>
<feature type="chain" id="PRO_1000001417" description="Holliday junction branch migration complex subunit RuvB">
    <location>
        <begin position="1"/>
        <end position="344"/>
    </location>
</feature>
<feature type="region of interest" description="Large ATPase domain (RuvB-L)" evidence="1">
    <location>
        <begin position="1"/>
        <end position="186"/>
    </location>
</feature>
<feature type="region of interest" description="Disordered" evidence="2">
    <location>
        <begin position="1"/>
        <end position="33"/>
    </location>
</feature>
<feature type="region of interest" description="Small ATPAse domain (RuvB-S)" evidence="1">
    <location>
        <begin position="187"/>
        <end position="257"/>
    </location>
</feature>
<feature type="region of interest" description="Head domain (RuvB-H)" evidence="1">
    <location>
        <begin position="260"/>
        <end position="344"/>
    </location>
</feature>
<feature type="compositionally biased region" description="Basic and acidic residues" evidence="2">
    <location>
        <begin position="1"/>
        <end position="25"/>
    </location>
</feature>
<feature type="binding site" evidence="1">
    <location>
        <position position="25"/>
    </location>
    <ligand>
        <name>ATP</name>
        <dbReference type="ChEBI" id="CHEBI:30616"/>
    </ligand>
</feature>
<feature type="binding site" evidence="1">
    <location>
        <position position="26"/>
    </location>
    <ligand>
        <name>ATP</name>
        <dbReference type="ChEBI" id="CHEBI:30616"/>
    </ligand>
</feature>
<feature type="binding site" evidence="1">
    <location>
        <position position="67"/>
    </location>
    <ligand>
        <name>ATP</name>
        <dbReference type="ChEBI" id="CHEBI:30616"/>
    </ligand>
</feature>
<feature type="binding site" evidence="1">
    <location>
        <position position="70"/>
    </location>
    <ligand>
        <name>ATP</name>
        <dbReference type="ChEBI" id="CHEBI:30616"/>
    </ligand>
</feature>
<feature type="binding site" evidence="1">
    <location>
        <position position="71"/>
    </location>
    <ligand>
        <name>ATP</name>
        <dbReference type="ChEBI" id="CHEBI:30616"/>
    </ligand>
</feature>
<feature type="binding site" evidence="1">
    <location>
        <position position="71"/>
    </location>
    <ligand>
        <name>Mg(2+)</name>
        <dbReference type="ChEBI" id="CHEBI:18420"/>
    </ligand>
</feature>
<feature type="binding site" evidence="1">
    <location>
        <position position="72"/>
    </location>
    <ligand>
        <name>ATP</name>
        <dbReference type="ChEBI" id="CHEBI:30616"/>
    </ligand>
</feature>
<feature type="binding site" evidence="1">
    <location>
        <begin position="133"/>
        <end position="135"/>
    </location>
    <ligand>
        <name>ATP</name>
        <dbReference type="ChEBI" id="CHEBI:30616"/>
    </ligand>
</feature>
<feature type="binding site" evidence="1">
    <location>
        <position position="176"/>
    </location>
    <ligand>
        <name>ATP</name>
        <dbReference type="ChEBI" id="CHEBI:30616"/>
    </ligand>
</feature>
<feature type="binding site" evidence="1">
    <location>
        <position position="186"/>
    </location>
    <ligand>
        <name>ATP</name>
        <dbReference type="ChEBI" id="CHEBI:30616"/>
    </ligand>
</feature>
<feature type="binding site" evidence="1">
    <location>
        <position position="223"/>
    </location>
    <ligand>
        <name>ATP</name>
        <dbReference type="ChEBI" id="CHEBI:30616"/>
    </ligand>
</feature>
<feature type="binding site" evidence="1">
    <location>
        <position position="296"/>
    </location>
    <ligand>
        <name>DNA</name>
        <dbReference type="ChEBI" id="CHEBI:16991"/>
    </ligand>
</feature>
<feature type="binding site" evidence="1">
    <location>
        <position position="315"/>
    </location>
    <ligand>
        <name>DNA</name>
        <dbReference type="ChEBI" id="CHEBI:16991"/>
    </ligand>
</feature>
<feature type="binding site" evidence="1">
    <location>
        <position position="320"/>
    </location>
    <ligand>
        <name>DNA</name>
        <dbReference type="ChEBI" id="CHEBI:16991"/>
    </ligand>
</feature>
<reference key="1">
    <citation type="submission" date="2006-02" db="EMBL/GenBank/DDBJ databases">
        <title>Complete sequence of chromosome of Jannaschia sp. CCS1.</title>
        <authorList>
            <consortium name="US DOE Joint Genome Institute"/>
            <person name="Copeland A."/>
            <person name="Lucas S."/>
            <person name="Lapidus A."/>
            <person name="Barry K."/>
            <person name="Detter J.C."/>
            <person name="Glavina del Rio T."/>
            <person name="Hammon N."/>
            <person name="Israni S."/>
            <person name="Pitluck S."/>
            <person name="Brettin T."/>
            <person name="Bruce D."/>
            <person name="Han C."/>
            <person name="Tapia R."/>
            <person name="Gilna P."/>
            <person name="Chertkov O."/>
            <person name="Saunders E."/>
            <person name="Schmutz J."/>
            <person name="Larimer F."/>
            <person name="Land M."/>
            <person name="Kyrpides N."/>
            <person name="Lykidis A."/>
            <person name="Moran M.A."/>
            <person name="Belas R."/>
            <person name="Ye W."/>
            <person name="Buchan A."/>
            <person name="Gonzalez J.M."/>
            <person name="Schell M.A."/>
            <person name="Richardson P."/>
        </authorList>
    </citation>
    <scope>NUCLEOTIDE SEQUENCE [LARGE SCALE GENOMIC DNA]</scope>
    <source>
        <strain>CCS1</strain>
    </source>
</reference>
<evidence type="ECO:0000255" key="1">
    <source>
        <dbReference type="HAMAP-Rule" id="MF_00016"/>
    </source>
</evidence>
<evidence type="ECO:0000256" key="2">
    <source>
        <dbReference type="SAM" id="MobiDB-lite"/>
    </source>
</evidence>
<gene>
    <name evidence="1" type="primary">ruvB</name>
    <name type="ordered locus">Jann_0966</name>
</gene>
<sequence length="344" mass="37485">MTDSDPTLRPDRLPEDVQATDDRALRPQSLDDFTGQEEARANLRVFIESARRRGEAMDHVLFHGPPGLGKTTLAQIMAKELGVGFRMTSGPVLAKAGDLAAILTNLEAKDVLFIDEIHRLNPVVEEILYPALEDFELDLVIGEGPAARTVRIELQPFTLVGATTRLGLLTTPLRDRFGIPTRLNFYTIAELDQIVARGARLAGIEADPKGTAEIAKRARGTPRIAGRLLRRVIDFAVVEGDGRLTQGIADSALTRLGVDDLGLDGADRRYLSLIAENYHGGPVGIETVAAALAEPRDALEEVIEPFLLQQGLIARTPRGRMLAHKGWTHLGMAPPKRPDQGELI</sequence>
<proteinExistence type="inferred from homology"/>